<reference key="1">
    <citation type="journal article" date="1984" name="J. Biol. Chem.">
        <title>Regulation of expression and nucleotide sequence of the Escherichia coli dapD gene.</title>
        <authorList>
            <person name="Richaud C."/>
            <person name="Richaud F."/>
            <person name="Martin C."/>
            <person name="Haziza C."/>
            <person name="Patte J.-C."/>
        </authorList>
    </citation>
    <scope>NUCLEOTIDE SEQUENCE [GENOMIC DNA]</scope>
</reference>
<reference key="2">
    <citation type="journal article" date="1994" name="Nucleic Acids Res.">
        <title>Systematic sequencing of the Escherichia coli genome: analysis of the 2.4-4.1 min (110,917-193,643 bp) region.</title>
        <authorList>
            <person name="Fujita N."/>
            <person name="Mori H."/>
            <person name="Yura T."/>
            <person name="Ishihama A."/>
        </authorList>
    </citation>
    <scope>NUCLEOTIDE SEQUENCE [LARGE SCALE GENOMIC DNA]</scope>
    <source>
        <strain>K12 / W3110 / ATCC 27325 / DSM 5911</strain>
    </source>
</reference>
<reference key="3">
    <citation type="submission" date="1997-01" db="EMBL/GenBank/DDBJ databases">
        <title>Sequence of minutes 4-25 of Escherichia coli.</title>
        <authorList>
            <person name="Chung E."/>
            <person name="Allen E."/>
            <person name="Araujo R."/>
            <person name="Aparicio A.M."/>
            <person name="Davis K."/>
            <person name="Duncan M."/>
            <person name="Federspiel N."/>
            <person name="Hyman R."/>
            <person name="Kalman S."/>
            <person name="Komp C."/>
            <person name="Kurdi O."/>
            <person name="Lew H."/>
            <person name="Lin D."/>
            <person name="Namath A."/>
            <person name="Oefner P."/>
            <person name="Roberts D."/>
            <person name="Schramm S."/>
            <person name="Davis R.W."/>
        </authorList>
    </citation>
    <scope>NUCLEOTIDE SEQUENCE [LARGE SCALE GENOMIC DNA]</scope>
    <source>
        <strain>K12 / MG1655 / ATCC 47076</strain>
    </source>
</reference>
<reference key="4">
    <citation type="journal article" date="1997" name="Science">
        <title>The complete genome sequence of Escherichia coli K-12.</title>
        <authorList>
            <person name="Blattner F.R."/>
            <person name="Plunkett G. III"/>
            <person name="Bloch C.A."/>
            <person name="Perna N.T."/>
            <person name="Burland V."/>
            <person name="Riley M."/>
            <person name="Collado-Vides J."/>
            <person name="Glasner J.D."/>
            <person name="Rode C.K."/>
            <person name="Mayhew G.F."/>
            <person name="Gregor J."/>
            <person name="Davis N.W."/>
            <person name="Kirkpatrick H.A."/>
            <person name="Goeden M.A."/>
            <person name="Rose D.J."/>
            <person name="Mau B."/>
            <person name="Shao Y."/>
        </authorList>
    </citation>
    <scope>NUCLEOTIDE SEQUENCE [LARGE SCALE GENOMIC DNA]</scope>
    <source>
        <strain>K12 / MG1655 / ATCC 47076</strain>
    </source>
</reference>
<reference key="5">
    <citation type="journal article" date="2006" name="Mol. Syst. Biol.">
        <title>Highly accurate genome sequences of Escherichia coli K-12 strains MG1655 and W3110.</title>
        <authorList>
            <person name="Hayashi K."/>
            <person name="Morooka N."/>
            <person name="Yamamoto Y."/>
            <person name="Fujita K."/>
            <person name="Isono K."/>
            <person name="Choi S."/>
            <person name="Ohtsubo E."/>
            <person name="Baba T."/>
            <person name="Wanner B.L."/>
            <person name="Mori H."/>
            <person name="Horiuchi T."/>
        </authorList>
    </citation>
    <scope>NUCLEOTIDE SEQUENCE [LARGE SCALE GENOMIC DNA]</scope>
    <source>
        <strain>K12 / W3110 / ATCC 27325 / DSM 5911</strain>
    </source>
</reference>
<reference key="6">
    <citation type="journal article" date="1993" name="Mol. Microbiol.">
        <title>The genes of the glutamine synthetase adenylylation cascade are not regulated by nitrogen in Escherichia coli.</title>
        <authorList>
            <person name="van Heeswijk W.C."/>
            <person name="Rabenberg M."/>
            <person name="Westerhoff H.V."/>
            <person name="Kahn D.D."/>
        </authorList>
    </citation>
    <scope>NUCLEOTIDE SEQUENCE [GENOMIC DNA] OF 1-15</scope>
    <source>
        <strain>K12 / W3110 / ATCC 27325 / DSM 5911</strain>
    </source>
</reference>
<reference key="7">
    <citation type="submission" date="1994-09" db="UniProtKB">
        <authorList>
            <person name="Pasquali C."/>
            <person name="Sanchez J.-C."/>
            <person name="Ravier F."/>
            <person name="Golaz O."/>
            <person name="Hughes G.J."/>
            <person name="Frutiger S."/>
            <person name="Paquet N."/>
            <person name="Wilkins M."/>
            <person name="Appel R.D."/>
            <person name="Bairoch A."/>
            <person name="Hochstrasser D.F."/>
        </authorList>
    </citation>
    <scope>PROTEIN SEQUENCE OF 1-11</scope>
    <source>
        <strain>K12 / W3110 / ATCC 27325 / DSM 5911</strain>
    </source>
</reference>
<reference key="8">
    <citation type="journal article" date="1997" name="Electrophoresis">
        <title>Comparing the predicted and observed properties of proteins encoded in the genome of Escherichia coli K-12.</title>
        <authorList>
            <person name="Link A.J."/>
            <person name="Robison K."/>
            <person name="Church G.M."/>
        </authorList>
    </citation>
    <scope>PROTEIN SEQUENCE OF 1-12</scope>
    <source>
        <strain>K12 / EMG2</strain>
    </source>
</reference>
<reference key="9">
    <citation type="journal article" date="1984" name="J. Biol. Chem.">
        <title>Purification and characterization of succinyl-CoA: tetrahydrodipicolinate N-succinyltransferase from Escherichia coli.</title>
        <authorList>
            <person name="Simms S.A."/>
            <person name="Voige W.H."/>
            <person name="Gilvarg C."/>
        </authorList>
    </citation>
    <scope>FUNCTION</scope>
    <scope>CATALYTIC ACTIVITY</scope>
    <scope>BIOPHYSICOCHEMICAL PROPERTIES</scope>
    <scope>ACTIVITY REGULATION</scope>
    <scope>SUBUNIT</scope>
    <scope>PATHWAY</scope>
</reference>
<accession>P0A9D8</accession>
<accession>P03948</accession>
<sequence>MQQLQNIIETAFERRAEITPANADTVTREAVNQVIALLDSGALRVAEKIDGQWVTHQWLKKAVLLSFRINDNQVIEGAESRYFDKVPMKFADYDEARFQKEGFRVVPPAAVRQGAFIARNTVLMPSYVNIGAYVDEGTMVDTWATVGSCAQIGKNVHLSGGVGIGGVLEPLQANPTIIEDNCFIGARSEVVEGVIVEEGSVISMGVYIGQSTRIYDRETGEIHYGRVPAGSVVVSGNLPSKDGKYSLYCAVIVKKVDAKTRGKVGINELLRTID</sequence>
<protein>
    <recommendedName>
        <fullName>2,3,4,5-tetrahydropyridine-2,6-dicarboxylate N-succinyltransferase</fullName>
        <ecNumber evidence="2">2.3.1.117</ecNumber>
    </recommendedName>
    <alternativeName>
        <fullName evidence="3">Succinyl-CoA: tetrahydrodipicolinate N-succinyltransferase</fullName>
    </alternativeName>
    <alternativeName>
        <fullName>Tetrahydrodipicolinate N-succinyltransferase</fullName>
        <shortName>THDP succinyltransferase</shortName>
        <shortName>THP succinyltransferase</shortName>
        <shortName evidence="3">Tetrahydropicolinate succinylase</shortName>
    </alternativeName>
</protein>
<feature type="chain" id="PRO_0000196933" description="2,3,4,5-tetrahydropyridine-2,6-dicarboxylate N-succinyltransferase">
    <location>
        <begin position="1"/>
        <end position="274"/>
    </location>
</feature>
<feature type="binding site" evidence="1">
    <location>
        <position position="104"/>
    </location>
    <ligand>
        <name>substrate</name>
    </ligand>
</feature>
<feature type="binding site" evidence="1">
    <location>
        <position position="141"/>
    </location>
    <ligand>
        <name>substrate</name>
    </ligand>
</feature>
<feature type="sequence conflict" description="In Ref. 1; AAA23667." evidence="4" ref="1">
    <original>V</original>
    <variation>D</variation>
    <location>
        <position position="31"/>
    </location>
</feature>
<feature type="sequence conflict" description="In Ref. 1; AAA23667." evidence="4" ref="1">
    <original>G</original>
    <variation>R</variation>
    <location>
        <position position="163"/>
    </location>
</feature>
<feature type="sequence conflict" description="In Ref. 1; AAA23667." evidence="4" ref="1">
    <original>I</original>
    <variation>M</variation>
    <location>
        <position position="177"/>
    </location>
</feature>
<feature type="sequence conflict" description="In Ref. 1; AAA23667." evidence="4" ref="1">
    <original>V</original>
    <variation>L</variation>
    <location>
        <position position="190"/>
    </location>
</feature>
<name>DAPD_ECOLI</name>
<gene>
    <name type="primary">dapD</name>
    <name type="ordered locus">b0166</name>
    <name type="ordered locus">JW0161</name>
</gene>
<proteinExistence type="evidence at protein level"/>
<keyword id="KW-0012">Acyltransferase</keyword>
<keyword id="KW-0028">Amino-acid biosynthesis</keyword>
<keyword id="KW-0963">Cytoplasm</keyword>
<keyword id="KW-0220">Diaminopimelate biosynthesis</keyword>
<keyword id="KW-0903">Direct protein sequencing</keyword>
<keyword id="KW-0457">Lysine biosynthesis</keyword>
<keyword id="KW-1185">Reference proteome</keyword>
<keyword id="KW-0677">Repeat</keyword>
<keyword id="KW-0808">Transferase</keyword>
<comment type="function">
    <text evidence="2">Catalyzes the formation of N-succinyl-2-amino-6-oxo-L-pimelate from succinyl-CoA and tetrahydrodipicolinate, a key step in lysine biosynthesis via diaminopimelate pathway.</text>
</comment>
<comment type="catalytic activity">
    <reaction evidence="2">
        <text>(S)-2,3,4,5-tetrahydrodipicolinate + succinyl-CoA + H2O = (S)-2-succinylamino-6-oxoheptanedioate + CoA</text>
        <dbReference type="Rhea" id="RHEA:17325"/>
        <dbReference type="ChEBI" id="CHEBI:15377"/>
        <dbReference type="ChEBI" id="CHEBI:15685"/>
        <dbReference type="ChEBI" id="CHEBI:16845"/>
        <dbReference type="ChEBI" id="CHEBI:57287"/>
        <dbReference type="ChEBI" id="CHEBI:57292"/>
        <dbReference type="EC" id="2.3.1.117"/>
    </reaction>
    <physiologicalReaction direction="left-to-right" evidence="5">
        <dbReference type="Rhea" id="RHEA:17326"/>
    </physiologicalReaction>
</comment>
<comment type="activity regulation">
    <text evidence="2">Inhibited by N-ethylmaleimide, p-chloromercuriphenyl sulfonate, cobalt and copper ions.</text>
</comment>
<comment type="biophysicochemical properties">
    <kinetics>
        <KM evidence="2">15 uM for succinyl-CoA (at pH 7.4)</KM>
        <KM evidence="2">22 uM for tetrahydrodipicolinate (THDPA) (at pH 7.4)</KM>
        <text evidence="2">kcat is 2600 min(-1).</text>
    </kinetics>
    <phDependence>
        <text evidence="2">Optimum pH is 8.2.</text>
    </phDependence>
</comment>
<comment type="pathway">
    <text evidence="5">Amino-acid biosynthesis; L-lysine biosynthesis via DAP pathway; LL-2,6-diaminopimelate from (S)-tetrahydrodipicolinate (succinylase route): step 1/3.</text>
</comment>
<comment type="subunit">
    <text evidence="2 4">Was originally thought to be a homodimer, but is rather a homotrimer as shown in orthologs.</text>
</comment>
<comment type="subcellular location">
    <subcellularLocation>
        <location>Cytoplasm</location>
    </subcellularLocation>
</comment>
<comment type="similarity">
    <text evidence="4">Belongs to the transferase hexapeptide repeat family.</text>
</comment>
<dbReference type="EC" id="2.3.1.117" evidence="2"/>
<dbReference type="EMBL" id="K02970">
    <property type="protein sequence ID" value="AAA23667.1"/>
    <property type="molecule type" value="Genomic_DNA"/>
</dbReference>
<dbReference type="EMBL" id="U70214">
    <property type="protein sequence ID" value="AAB08595.1"/>
    <property type="molecule type" value="Genomic_DNA"/>
</dbReference>
<dbReference type="EMBL" id="U00096">
    <property type="protein sequence ID" value="AAC73277.1"/>
    <property type="molecule type" value="Genomic_DNA"/>
</dbReference>
<dbReference type="EMBL" id="AP009048">
    <property type="protein sequence ID" value="BAB96742.1"/>
    <property type="molecule type" value="Genomic_DNA"/>
</dbReference>
<dbReference type="EMBL" id="Z21842">
    <property type="protein sequence ID" value="CAA79888.1"/>
    <property type="molecule type" value="Genomic_DNA"/>
</dbReference>
<dbReference type="PIR" id="F64740">
    <property type="entry name" value="XNECSD"/>
</dbReference>
<dbReference type="RefSeq" id="NP_414708.1">
    <property type="nucleotide sequence ID" value="NC_000913.3"/>
</dbReference>
<dbReference type="RefSeq" id="WP_001186650.1">
    <property type="nucleotide sequence ID" value="NZ_STEB01000032.1"/>
</dbReference>
<dbReference type="SMR" id="P0A9D8"/>
<dbReference type="BioGRID" id="4259746">
    <property type="interactions" value="14"/>
</dbReference>
<dbReference type="BioGRID" id="849262">
    <property type="interactions" value="1"/>
</dbReference>
<dbReference type="DIP" id="DIP-31866N"/>
<dbReference type="FunCoup" id="P0A9D8">
    <property type="interactions" value="354"/>
</dbReference>
<dbReference type="IntAct" id="P0A9D8">
    <property type="interactions" value="5"/>
</dbReference>
<dbReference type="STRING" id="511145.b0166"/>
<dbReference type="jPOST" id="P0A9D8"/>
<dbReference type="PaxDb" id="511145-b0166"/>
<dbReference type="EnsemblBacteria" id="AAC73277">
    <property type="protein sequence ID" value="AAC73277"/>
    <property type="gene ID" value="b0166"/>
</dbReference>
<dbReference type="GeneID" id="93777259"/>
<dbReference type="GeneID" id="944862"/>
<dbReference type="KEGG" id="ecj:JW0161"/>
<dbReference type="KEGG" id="eco:b0166"/>
<dbReference type="KEGG" id="ecoc:C3026_00755"/>
<dbReference type="PATRIC" id="fig|1411691.4.peg.2115"/>
<dbReference type="EchoBASE" id="EB0203"/>
<dbReference type="eggNOG" id="COG2171">
    <property type="taxonomic scope" value="Bacteria"/>
</dbReference>
<dbReference type="HOGENOM" id="CLU_050859_0_1_6"/>
<dbReference type="InParanoid" id="P0A9D8"/>
<dbReference type="OMA" id="YFPIQKM"/>
<dbReference type="OrthoDB" id="9775362at2"/>
<dbReference type="PhylomeDB" id="P0A9D8"/>
<dbReference type="BioCyc" id="EcoCyc:MONOMER0-2001"/>
<dbReference type="BioCyc" id="MetaCyc:MONOMER0-2001"/>
<dbReference type="SABIO-RK" id="P0A9D8"/>
<dbReference type="UniPathway" id="UPA00034">
    <property type="reaction ID" value="UER00019"/>
</dbReference>
<dbReference type="PRO" id="PR:P0A9D8"/>
<dbReference type="Proteomes" id="UP000000625">
    <property type="component" value="Chromosome"/>
</dbReference>
<dbReference type="GO" id="GO:0005829">
    <property type="term" value="C:cytosol"/>
    <property type="evidence" value="ECO:0000314"/>
    <property type="project" value="EcoCyc"/>
</dbReference>
<dbReference type="GO" id="GO:0008666">
    <property type="term" value="F:2,3,4,5-tetrahydropyridine-2,6-dicarboxylate N-succinyltransferase activity"/>
    <property type="evidence" value="ECO:0000314"/>
    <property type="project" value="EcoCyc"/>
</dbReference>
<dbReference type="GO" id="GO:0016779">
    <property type="term" value="F:nucleotidyltransferase activity"/>
    <property type="evidence" value="ECO:0000318"/>
    <property type="project" value="GO_Central"/>
</dbReference>
<dbReference type="GO" id="GO:0019877">
    <property type="term" value="P:diaminopimelate biosynthetic process"/>
    <property type="evidence" value="ECO:0000315"/>
    <property type="project" value="EcoCyc"/>
</dbReference>
<dbReference type="GO" id="GO:0009085">
    <property type="term" value="P:lysine biosynthetic process"/>
    <property type="evidence" value="ECO:0000314"/>
    <property type="project" value="EcoCyc"/>
</dbReference>
<dbReference type="GO" id="GO:0009089">
    <property type="term" value="P:lysine biosynthetic process via diaminopimelate"/>
    <property type="evidence" value="ECO:0007669"/>
    <property type="project" value="UniProtKB-UniRule"/>
</dbReference>
<dbReference type="CDD" id="cd03350">
    <property type="entry name" value="LbH_THP_succinylT"/>
    <property type="match status" value="1"/>
</dbReference>
<dbReference type="FunFam" id="1.10.166.10:FF:000001">
    <property type="entry name" value="2,3,4,5-tetrahydropyridine-2,6-dicarboxylate N-succinyltransferase"/>
    <property type="match status" value="1"/>
</dbReference>
<dbReference type="FunFam" id="2.160.10.10:FF:000004">
    <property type="entry name" value="2,3,4,5-tetrahydropyridine-2,6-dicarboxylate N-succinyltransferase"/>
    <property type="match status" value="1"/>
</dbReference>
<dbReference type="Gene3D" id="2.160.10.10">
    <property type="entry name" value="Hexapeptide repeat proteins"/>
    <property type="match status" value="1"/>
</dbReference>
<dbReference type="Gene3D" id="1.10.166.10">
    <property type="entry name" value="Tetrahydrodipicolinate-N-succinyltransferase, N-terminal domain"/>
    <property type="match status" value="1"/>
</dbReference>
<dbReference type="HAMAP" id="MF_00811">
    <property type="entry name" value="DapD"/>
    <property type="match status" value="1"/>
</dbReference>
<dbReference type="InterPro" id="IPR005664">
    <property type="entry name" value="DapD_Trfase_Hexpep_rpt_fam"/>
</dbReference>
<dbReference type="InterPro" id="IPR001451">
    <property type="entry name" value="Hexapep"/>
</dbReference>
<dbReference type="InterPro" id="IPR018357">
    <property type="entry name" value="Hexapep_transf_CS"/>
</dbReference>
<dbReference type="InterPro" id="IPR023180">
    <property type="entry name" value="THP_succinylTrfase_dom1"/>
</dbReference>
<dbReference type="InterPro" id="IPR037133">
    <property type="entry name" value="THP_succinylTrfase_N_sf"/>
</dbReference>
<dbReference type="InterPro" id="IPR011004">
    <property type="entry name" value="Trimer_LpxA-like_sf"/>
</dbReference>
<dbReference type="NCBIfam" id="TIGR00965">
    <property type="entry name" value="dapD"/>
    <property type="match status" value="1"/>
</dbReference>
<dbReference type="NCBIfam" id="NF008808">
    <property type="entry name" value="PRK11830.1"/>
    <property type="match status" value="1"/>
</dbReference>
<dbReference type="PANTHER" id="PTHR19136:SF52">
    <property type="entry name" value="2,3,4,5-TETRAHYDROPYRIDINE-2,6-DICARBOXYLATE N-SUCCINYLTRANSFERASE"/>
    <property type="match status" value="1"/>
</dbReference>
<dbReference type="PANTHER" id="PTHR19136">
    <property type="entry name" value="MOLYBDENUM COFACTOR GUANYLYLTRANSFERASE"/>
    <property type="match status" value="1"/>
</dbReference>
<dbReference type="Pfam" id="PF14602">
    <property type="entry name" value="Hexapep_2"/>
    <property type="match status" value="1"/>
</dbReference>
<dbReference type="Pfam" id="PF14805">
    <property type="entry name" value="THDPS_N_2"/>
    <property type="match status" value="1"/>
</dbReference>
<dbReference type="SUPFAM" id="SSF51161">
    <property type="entry name" value="Trimeric LpxA-like enzymes"/>
    <property type="match status" value="1"/>
</dbReference>
<dbReference type="PROSITE" id="PS00101">
    <property type="entry name" value="HEXAPEP_TRANSFERASES"/>
    <property type="match status" value="1"/>
</dbReference>
<evidence type="ECO:0000250" key="1"/>
<evidence type="ECO:0000269" key="2">
    <source>
    </source>
</evidence>
<evidence type="ECO:0000303" key="3">
    <source>
    </source>
</evidence>
<evidence type="ECO:0000305" key="4"/>
<evidence type="ECO:0000305" key="5">
    <source>
    </source>
</evidence>
<organism>
    <name type="scientific">Escherichia coli (strain K12)</name>
    <dbReference type="NCBI Taxonomy" id="83333"/>
    <lineage>
        <taxon>Bacteria</taxon>
        <taxon>Pseudomonadati</taxon>
        <taxon>Pseudomonadota</taxon>
        <taxon>Gammaproteobacteria</taxon>
        <taxon>Enterobacterales</taxon>
        <taxon>Enterobacteriaceae</taxon>
        <taxon>Escherichia</taxon>
    </lineage>
</organism>